<protein>
    <recommendedName>
        <fullName evidence="1">4-diphosphocytidyl-2-C-methyl-D-erythritol kinase</fullName>
        <shortName evidence="1">CMK</shortName>
        <ecNumber evidence="1">2.7.1.148</ecNumber>
    </recommendedName>
    <alternativeName>
        <fullName evidence="1">4-(cytidine-5'-diphospho)-2-C-methyl-D-erythritol kinase</fullName>
    </alternativeName>
</protein>
<accession>Q7V7W1</accession>
<feature type="chain" id="PRO_0000189247" description="4-diphosphocytidyl-2-C-methyl-D-erythritol kinase">
    <location>
        <begin position="1"/>
        <end position="319"/>
    </location>
</feature>
<feature type="active site" evidence="1">
    <location>
        <position position="21"/>
    </location>
</feature>
<feature type="active site" evidence="1">
    <location>
        <position position="148"/>
    </location>
</feature>
<feature type="binding site" evidence="1">
    <location>
        <begin position="106"/>
        <end position="116"/>
    </location>
    <ligand>
        <name>ATP</name>
        <dbReference type="ChEBI" id="CHEBI:30616"/>
    </ligand>
</feature>
<proteinExistence type="inferred from homology"/>
<sequence>MSISNPSAASEHLVSVSAPAKINLHLEVLGLRSDGFHELAMVMQSIELADQLHFRNTADGSISLRCDDSSLSTAGDNLIVRAAHLLRERSGFSDLGAAIELQKRIPIGAGLAGGSSDGAATLVGLNGLWNLNFSQGQLEGFAAELGSDMPFCLAGGSQLCFGRGERLESLQAMKASMAVVLVKDPSVSVSTPWAYGRCKELFSSRYLSKESDFEQRRQQLRESSWLNPLRADDPPPLRNDLQEVVAPEVSAVQTTLKLLTDLPGSLAVSMSGSGPSCFALFADVASAQAALQLQQPAFAAAGLSSWCCAFRCEGIKLEA</sequence>
<name>ISPE_PROMM</name>
<reference key="1">
    <citation type="journal article" date="2003" name="Nature">
        <title>Genome divergence in two Prochlorococcus ecotypes reflects oceanic niche differentiation.</title>
        <authorList>
            <person name="Rocap G."/>
            <person name="Larimer F.W."/>
            <person name="Lamerdin J.E."/>
            <person name="Malfatti S."/>
            <person name="Chain P."/>
            <person name="Ahlgren N.A."/>
            <person name="Arellano A."/>
            <person name="Coleman M."/>
            <person name="Hauser L."/>
            <person name="Hess W.R."/>
            <person name="Johnson Z.I."/>
            <person name="Land M.L."/>
            <person name="Lindell D."/>
            <person name="Post A.F."/>
            <person name="Regala W."/>
            <person name="Shah M."/>
            <person name="Shaw S.L."/>
            <person name="Steglich C."/>
            <person name="Sullivan M.B."/>
            <person name="Ting C.S."/>
            <person name="Tolonen A."/>
            <person name="Webb E.A."/>
            <person name="Zinser E.R."/>
            <person name="Chisholm S.W."/>
        </authorList>
    </citation>
    <scope>NUCLEOTIDE SEQUENCE [LARGE SCALE GENOMIC DNA]</scope>
    <source>
        <strain>MIT 9313</strain>
    </source>
</reference>
<dbReference type="EC" id="2.7.1.148" evidence="1"/>
<dbReference type="EMBL" id="BX548175">
    <property type="protein sequence ID" value="CAE20795.1"/>
    <property type="molecule type" value="Genomic_DNA"/>
</dbReference>
<dbReference type="RefSeq" id="WP_011129999.1">
    <property type="nucleotide sequence ID" value="NC_005071.1"/>
</dbReference>
<dbReference type="SMR" id="Q7V7W1"/>
<dbReference type="KEGG" id="pmt:PMT_0620"/>
<dbReference type="eggNOG" id="COG1947">
    <property type="taxonomic scope" value="Bacteria"/>
</dbReference>
<dbReference type="HOGENOM" id="CLU_053057_1_1_3"/>
<dbReference type="OrthoDB" id="9809438at2"/>
<dbReference type="UniPathway" id="UPA00056">
    <property type="reaction ID" value="UER00094"/>
</dbReference>
<dbReference type="Proteomes" id="UP000001423">
    <property type="component" value="Chromosome"/>
</dbReference>
<dbReference type="GO" id="GO:0050515">
    <property type="term" value="F:4-(cytidine 5'-diphospho)-2-C-methyl-D-erythritol kinase activity"/>
    <property type="evidence" value="ECO:0007669"/>
    <property type="project" value="UniProtKB-UniRule"/>
</dbReference>
<dbReference type="GO" id="GO:0005524">
    <property type="term" value="F:ATP binding"/>
    <property type="evidence" value="ECO:0007669"/>
    <property type="project" value="UniProtKB-UniRule"/>
</dbReference>
<dbReference type="GO" id="GO:0019288">
    <property type="term" value="P:isopentenyl diphosphate biosynthetic process, methylerythritol 4-phosphate pathway"/>
    <property type="evidence" value="ECO:0007669"/>
    <property type="project" value="UniProtKB-UniRule"/>
</dbReference>
<dbReference type="GO" id="GO:0016114">
    <property type="term" value="P:terpenoid biosynthetic process"/>
    <property type="evidence" value="ECO:0007669"/>
    <property type="project" value="InterPro"/>
</dbReference>
<dbReference type="Gene3D" id="3.30.230.10">
    <property type="match status" value="1"/>
</dbReference>
<dbReference type="Gene3D" id="3.30.70.890">
    <property type="entry name" value="GHMP kinase, C-terminal domain"/>
    <property type="match status" value="1"/>
</dbReference>
<dbReference type="HAMAP" id="MF_00061">
    <property type="entry name" value="IspE"/>
    <property type="match status" value="1"/>
</dbReference>
<dbReference type="InterPro" id="IPR013750">
    <property type="entry name" value="GHMP_kinase_C_dom"/>
</dbReference>
<dbReference type="InterPro" id="IPR036554">
    <property type="entry name" value="GHMP_kinase_C_sf"/>
</dbReference>
<dbReference type="InterPro" id="IPR006204">
    <property type="entry name" value="GHMP_kinase_N_dom"/>
</dbReference>
<dbReference type="InterPro" id="IPR004424">
    <property type="entry name" value="IspE"/>
</dbReference>
<dbReference type="InterPro" id="IPR020568">
    <property type="entry name" value="Ribosomal_Su5_D2-typ_SF"/>
</dbReference>
<dbReference type="InterPro" id="IPR014721">
    <property type="entry name" value="Ribsml_uS5_D2-typ_fold_subgr"/>
</dbReference>
<dbReference type="NCBIfam" id="TIGR00154">
    <property type="entry name" value="ispE"/>
    <property type="match status" value="1"/>
</dbReference>
<dbReference type="PANTHER" id="PTHR43527">
    <property type="entry name" value="4-DIPHOSPHOCYTIDYL-2-C-METHYL-D-ERYTHRITOL KINASE, CHLOROPLASTIC"/>
    <property type="match status" value="1"/>
</dbReference>
<dbReference type="PANTHER" id="PTHR43527:SF2">
    <property type="entry name" value="4-DIPHOSPHOCYTIDYL-2-C-METHYL-D-ERYTHRITOL KINASE, CHLOROPLASTIC"/>
    <property type="match status" value="1"/>
</dbReference>
<dbReference type="Pfam" id="PF08544">
    <property type="entry name" value="GHMP_kinases_C"/>
    <property type="match status" value="1"/>
</dbReference>
<dbReference type="Pfam" id="PF00288">
    <property type="entry name" value="GHMP_kinases_N"/>
    <property type="match status" value="1"/>
</dbReference>
<dbReference type="PIRSF" id="PIRSF010376">
    <property type="entry name" value="IspE"/>
    <property type="match status" value="1"/>
</dbReference>
<dbReference type="SUPFAM" id="SSF55060">
    <property type="entry name" value="GHMP Kinase, C-terminal domain"/>
    <property type="match status" value="1"/>
</dbReference>
<dbReference type="SUPFAM" id="SSF54211">
    <property type="entry name" value="Ribosomal protein S5 domain 2-like"/>
    <property type="match status" value="1"/>
</dbReference>
<evidence type="ECO:0000255" key="1">
    <source>
        <dbReference type="HAMAP-Rule" id="MF_00061"/>
    </source>
</evidence>
<comment type="function">
    <text evidence="1">Catalyzes the phosphorylation of the position 2 hydroxy group of 4-diphosphocytidyl-2C-methyl-D-erythritol.</text>
</comment>
<comment type="catalytic activity">
    <reaction evidence="1">
        <text>4-CDP-2-C-methyl-D-erythritol + ATP = 4-CDP-2-C-methyl-D-erythritol 2-phosphate + ADP + H(+)</text>
        <dbReference type="Rhea" id="RHEA:18437"/>
        <dbReference type="ChEBI" id="CHEBI:15378"/>
        <dbReference type="ChEBI" id="CHEBI:30616"/>
        <dbReference type="ChEBI" id="CHEBI:57823"/>
        <dbReference type="ChEBI" id="CHEBI:57919"/>
        <dbReference type="ChEBI" id="CHEBI:456216"/>
        <dbReference type="EC" id="2.7.1.148"/>
    </reaction>
</comment>
<comment type="pathway">
    <text evidence="1">Isoprenoid biosynthesis; isopentenyl diphosphate biosynthesis via DXP pathway; isopentenyl diphosphate from 1-deoxy-D-xylulose 5-phosphate: step 3/6.</text>
</comment>
<comment type="similarity">
    <text evidence="1">Belongs to the GHMP kinase family. IspE subfamily.</text>
</comment>
<organism>
    <name type="scientific">Prochlorococcus marinus (strain MIT 9313)</name>
    <dbReference type="NCBI Taxonomy" id="74547"/>
    <lineage>
        <taxon>Bacteria</taxon>
        <taxon>Bacillati</taxon>
        <taxon>Cyanobacteriota</taxon>
        <taxon>Cyanophyceae</taxon>
        <taxon>Synechococcales</taxon>
        <taxon>Prochlorococcaceae</taxon>
        <taxon>Prochlorococcus</taxon>
    </lineage>
</organism>
<keyword id="KW-0067">ATP-binding</keyword>
<keyword id="KW-0414">Isoprene biosynthesis</keyword>
<keyword id="KW-0418">Kinase</keyword>
<keyword id="KW-0547">Nucleotide-binding</keyword>
<keyword id="KW-1185">Reference proteome</keyword>
<keyword id="KW-0808">Transferase</keyword>
<gene>
    <name evidence="1" type="primary">ispE</name>
    <name type="ordered locus">PMT_0620</name>
</gene>